<comment type="function">
    <text evidence="1">Endonuclease that specifically degrades the RNA of RNA-DNA hybrids.</text>
</comment>
<comment type="catalytic activity">
    <reaction evidence="1">
        <text>Endonucleolytic cleavage to 5'-phosphomonoester.</text>
        <dbReference type="EC" id="3.1.26.4"/>
    </reaction>
</comment>
<comment type="cofactor">
    <cofactor evidence="1">
        <name>Mn(2+)</name>
        <dbReference type="ChEBI" id="CHEBI:29035"/>
    </cofactor>
    <cofactor evidence="1">
        <name>Mg(2+)</name>
        <dbReference type="ChEBI" id="CHEBI:18420"/>
    </cofactor>
    <text evidence="1">Manganese or magnesium. Binds 1 divalent metal ion per monomer in the absence of substrate. May bind a second metal ion after substrate binding.</text>
</comment>
<comment type="subcellular location">
    <subcellularLocation>
        <location evidence="1">Cytoplasm</location>
    </subcellularLocation>
</comment>
<comment type="similarity">
    <text evidence="1">Belongs to the RNase HII family.</text>
</comment>
<reference key="1">
    <citation type="journal article" date="2002" name="Lancet">
        <title>Genome and virulence determinants of high virulence community-acquired MRSA.</title>
        <authorList>
            <person name="Baba T."/>
            <person name="Takeuchi F."/>
            <person name="Kuroda M."/>
            <person name="Yuzawa H."/>
            <person name="Aoki K."/>
            <person name="Oguchi A."/>
            <person name="Nagai Y."/>
            <person name="Iwama N."/>
            <person name="Asano K."/>
            <person name="Naimi T."/>
            <person name="Kuroda H."/>
            <person name="Cui L."/>
            <person name="Yamamoto K."/>
            <person name="Hiramatsu K."/>
        </authorList>
    </citation>
    <scope>NUCLEOTIDE SEQUENCE [LARGE SCALE GENOMIC DNA]</scope>
    <source>
        <strain>MW2</strain>
    </source>
</reference>
<evidence type="ECO:0000255" key="1">
    <source>
        <dbReference type="HAMAP-Rule" id="MF_00052"/>
    </source>
</evidence>
<evidence type="ECO:0000255" key="2">
    <source>
        <dbReference type="PROSITE-ProRule" id="PRU01319"/>
    </source>
</evidence>
<feature type="chain" id="PRO_0000111626" description="Ribonuclease HII">
    <location>
        <begin position="1"/>
        <end position="255"/>
    </location>
</feature>
<feature type="domain" description="RNase H type-2" evidence="2">
    <location>
        <begin position="72"/>
        <end position="255"/>
    </location>
</feature>
<feature type="binding site" evidence="1">
    <location>
        <position position="78"/>
    </location>
    <ligand>
        <name>a divalent metal cation</name>
        <dbReference type="ChEBI" id="CHEBI:60240"/>
    </ligand>
</feature>
<feature type="binding site" evidence="1">
    <location>
        <position position="79"/>
    </location>
    <ligand>
        <name>a divalent metal cation</name>
        <dbReference type="ChEBI" id="CHEBI:60240"/>
    </ligand>
</feature>
<feature type="binding site" evidence="1">
    <location>
        <position position="170"/>
    </location>
    <ligand>
        <name>a divalent metal cation</name>
        <dbReference type="ChEBI" id="CHEBI:60240"/>
    </ligand>
</feature>
<gene>
    <name evidence="1" type="primary">rnhB</name>
    <name type="ordered locus">MW1127</name>
</gene>
<proteinExistence type="inferred from homology"/>
<protein>
    <recommendedName>
        <fullName evidence="1">Ribonuclease HII</fullName>
        <shortName evidence="1">RNase HII</shortName>
        <ecNumber evidence="1">3.1.26.4</ecNumber>
    </recommendedName>
</protein>
<accession>Q8NX02</accession>
<dbReference type="EC" id="3.1.26.4" evidence="1"/>
<dbReference type="EMBL" id="BA000033">
    <property type="protein sequence ID" value="BAB94992.1"/>
    <property type="molecule type" value="Genomic_DNA"/>
</dbReference>
<dbReference type="RefSeq" id="WP_000176387.1">
    <property type="nucleotide sequence ID" value="NC_003923.1"/>
</dbReference>
<dbReference type="SMR" id="Q8NX02"/>
<dbReference type="KEGG" id="sam:MW1127"/>
<dbReference type="HOGENOM" id="CLU_036532_2_1_9"/>
<dbReference type="GO" id="GO:0005737">
    <property type="term" value="C:cytoplasm"/>
    <property type="evidence" value="ECO:0007669"/>
    <property type="project" value="UniProtKB-SubCell"/>
</dbReference>
<dbReference type="GO" id="GO:0032299">
    <property type="term" value="C:ribonuclease H2 complex"/>
    <property type="evidence" value="ECO:0007669"/>
    <property type="project" value="TreeGrafter"/>
</dbReference>
<dbReference type="GO" id="GO:0030145">
    <property type="term" value="F:manganese ion binding"/>
    <property type="evidence" value="ECO:0007669"/>
    <property type="project" value="UniProtKB-UniRule"/>
</dbReference>
<dbReference type="GO" id="GO:0003723">
    <property type="term" value="F:RNA binding"/>
    <property type="evidence" value="ECO:0007669"/>
    <property type="project" value="InterPro"/>
</dbReference>
<dbReference type="GO" id="GO:0004523">
    <property type="term" value="F:RNA-DNA hybrid ribonuclease activity"/>
    <property type="evidence" value="ECO:0007669"/>
    <property type="project" value="UniProtKB-UniRule"/>
</dbReference>
<dbReference type="GO" id="GO:0043137">
    <property type="term" value="P:DNA replication, removal of RNA primer"/>
    <property type="evidence" value="ECO:0007669"/>
    <property type="project" value="TreeGrafter"/>
</dbReference>
<dbReference type="GO" id="GO:0006298">
    <property type="term" value="P:mismatch repair"/>
    <property type="evidence" value="ECO:0007669"/>
    <property type="project" value="TreeGrafter"/>
</dbReference>
<dbReference type="CDD" id="cd07182">
    <property type="entry name" value="RNase_HII_bacteria_HII_like"/>
    <property type="match status" value="1"/>
</dbReference>
<dbReference type="FunFam" id="3.30.420.10:FF:000006">
    <property type="entry name" value="Ribonuclease HII"/>
    <property type="match status" value="1"/>
</dbReference>
<dbReference type="Gene3D" id="3.30.420.10">
    <property type="entry name" value="Ribonuclease H-like superfamily/Ribonuclease H"/>
    <property type="match status" value="1"/>
</dbReference>
<dbReference type="HAMAP" id="MF_00052_B">
    <property type="entry name" value="RNase_HII_B"/>
    <property type="match status" value="1"/>
</dbReference>
<dbReference type="InterPro" id="IPR022898">
    <property type="entry name" value="RNase_HII"/>
</dbReference>
<dbReference type="InterPro" id="IPR001352">
    <property type="entry name" value="RNase_HII/HIII"/>
</dbReference>
<dbReference type="InterPro" id="IPR024567">
    <property type="entry name" value="RNase_HII/HIII_dom"/>
</dbReference>
<dbReference type="InterPro" id="IPR012337">
    <property type="entry name" value="RNaseH-like_sf"/>
</dbReference>
<dbReference type="InterPro" id="IPR036397">
    <property type="entry name" value="RNaseH_sf"/>
</dbReference>
<dbReference type="NCBIfam" id="NF000594">
    <property type="entry name" value="PRK00015.1-1"/>
    <property type="match status" value="1"/>
</dbReference>
<dbReference type="NCBIfam" id="NF000595">
    <property type="entry name" value="PRK00015.1-3"/>
    <property type="match status" value="1"/>
</dbReference>
<dbReference type="PANTHER" id="PTHR10954">
    <property type="entry name" value="RIBONUCLEASE H2 SUBUNIT A"/>
    <property type="match status" value="1"/>
</dbReference>
<dbReference type="PANTHER" id="PTHR10954:SF18">
    <property type="entry name" value="RIBONUCLEASE HII"/>
    <property type="match status" value="1"/>
</dbReference>
<dbReference type="Pfam" id="PF01351">
    <property type="entry name" value="RNase_HII"/>
    <property type="match status" value="1"/>
</dbReference>
<dbReference type="SUPFAM" id="SSF53098">
    <property type="entry name" value="Ribonuclease H-like"/>
    <property type="match status" value="1"/>
</dbReference>
<dbReference type="PROSITE" id="PS51975">
    <property type="entry name" value="RNASE_H_2"/>
    <property type="match status" value="1"/>
</dbReference>
<sequence length="255" mass="28540">MTLTIKEVKQLINAVNTIEELENHECFLDERKGVQNAIARRRKALEKEQALKEKYVEMTYFENEILKEHPNAIICGIDEVGRGPLAGPVVACATILNSNHNYLGLDDSKKVPVTKRLELNEALKNEVTAFAYGIATAEEIDEFNIYKATQIAMQRAIDGLSVQPTHLLIDAMTLDNALPQVSLIKGDARSVSIAAASIMAKVFRDDYMTQLSKDYPEYGFEKNAGYGTKQHLLAIDDIGIMKEHRKSFEPIKSLL</sequence>
<organism>
    <name type="scientific">Staphylococcus aureus (strain MW2)</name>
    <dbReference type="NCBI Taxonomy" id="196620"/>
    <lineage>
        <taxon>Bacteria</taxon>
        <taxon>Bacillati</taxon>
        <taxon>Bacillota</taxon>
        <taxon>Bacilli</taxon>
        <taxon>Bacillales</taxon>
        <taxon>Staphylococcaceae</taxon>
        <taxon>Staphylococcus</taxon>
    </lineage>
</organism>
<name>RNH2_STAAW</name>
<keyword id="KW-0963">Cytoplasm</keyword>
<keyword id="KW-0255">Endonuclease</keyword>
<keyword id="KW-0378">Hydrolase</keyword>
<keyword id="KW-0464">Manganese</keyword>
<keyword id="KW-0479">Metal-binding</keyword>
<keyword id="KW-0540">Nuclease</keyword>